<keyword id="KW-1003">Cell membrane</keyword>
<keyword id="KW-0472">Membrane</keyword>
<keyword id="KW-0865">Zymogen</keyword>
<comment type="function">
    <text evidence="1">Protease component of the SPS-sensor system, which regulates the expression of several amino acid-metabolizing enzymes and amino acid- and peptide-permeases in response to extracellular amino acid levels by controlling the activity of two transcription factors, STP1 and STP2. Catalyzes the activation of these transcription factors, which are synthesized as latent cytoplasmic precursors, by proteolytic removal of an N-terminal inhibitory domain containing cytoplasmic retention motifs. SSY5 binds as an inactive protease complex to STP1. In response to extracellular amino acids and dependent on the other SPS-sensor components, the inhibitory propeptide is induced to dissociate, and thereby enables the catalytic domain to process STP1 (By similarity).</text>
</comment>
<comment type="subunit">
    <text evidence="1">Component of the plasma membrane SPS (SSY1-PTR3-SSY5) amino acid sensor complex.</text>
</comment>
<comment type="subcellular location">
    <subcellularLocation>
        <location evidence="1">Cell membrane</location>
        <topology evidence="1">Peripheral membrane protein</topology>
        <orientation evidence="1">Cytoplasmic side</orientation>
    </subcellularLocation>
</comment>
<comment type="induction">
    <text evidence="1">Down-regulated after extracellular amino-acid addition.</text>
</comment>
<comment type="PTM">
    <text evidence="1">The propeptide is autoproteolytically cleaved from the catalytic domain but remains associated, forming an inactive protease complex. This processing occurs even in the absence of signaling (By similarity).</text>
</comment>
<comment type="similarity">
    <text evidence="4">Belongs to the peptidase S64 family.</text>
</comment>
<gene>
    <name type="primary">SSY5</name>
    <name type="synonym">APF8</name>
    <name type="ORF">SCY_3137</name>
</gene>
<name>SSY5_YEAS7</name>
<protein>
    <recommendedName>
        <fullName>SPS-sensor serine protease component SSY5</fullName>
    </recommendedName>
    <alternativeName>
        <fullName>Endoprotease SSY5</fullName>
    </alternativeName>
</protein>
<organism>
    <name type="scientific">Saccharomyces cerevisiae (strain YJM789)</name>
    <name type="common">Baker's yeast</name>
    <dbReference type="NCBI Taxonomy" id="307796"/>
    <lineage>
        <taxon>Eukaryota</taxon>
        <taxon>Fungi</taxon>
        <taxon>Dikarya</taxon>
        <taxon>Ascomycota</taxon>
        <taxon>Saccharomycotina</taxon>
        <taxon>Saccharomycetes</taxon>
        <taxon>Saccharomycetales</taxon>
        <taxon>Saccharomycetaceae</taxon>
        <taxon>Saccharomyces</taxon>
    </lineage>
</organism>
<proteinExistence type="inferred from homology"/>
<feature type="propeptide" id="PRO_0000377377">
    <location>
        <begin position="1"/>
        <end position="381"/>
    </location>
</feature>
<feature type="chain" id="PRO_0000377378" description="SPS-sensor serine protease component SSY5">
    <location>
        <begin position="382"/>
        <end position="699"/>
    </location>
</feature>
<feature type="region of interest" description="Disordered" evidence="3">
    <location>
        <begin position="1"/>
        <end position="113"/>
    </location>
</feature>
<feature type="region of interest" description="Disordered" evidence="3">
    <location>
        <begin position="129"/>
        <end position="158"/>
    </location>
</feature>
<feature type="region of interest" description="Serine protease">
    <location>
        <begin position="459"/>
        <end position="699"/>
    </location>
</feature>
<feature type="compositionally biased region" description="Polar residues" evidence="3">
    <location>
        <begin position="24"/>
        <end position="38"/>
    </location>
</feature>
<feature type="compositionally biased region" description="Basic and acidic residues" evidence="3">
    <location>
        <begin position="39"/>
        <end position="51"/>
    </location>
</feature>
<feature type="compositionally biased region" description="Low complexity" evidence="3">
    <location>
        <begin position="52"/>
        <end position="78"/>
    </location>
</feature>
<feature type="compositionally biased region" description="Polar residues" evidence="3">
    <location>
        <begin position="83"/>
        <end position="93"/>
    </location>
</feature>
<feature type="compositionally biased region" description="Low complexity" evidence="3">
    <location>
        <begin position="97"/>
        <end position="109"/>
    </location>
</feature>
<feature type="compositionally biased region" description="Low complexity" evidence="3">
    <location>
        <begin position="144"/>
        <end position="154"/>
    </location>
</feature>
<feature type="active site" description="Charge relay system" evidence="2">
    <location>
        <position position="465"/>
    </location>
</feature>
<feature type="active site" description="Charge relay system" evidence="2">
    <location>
        <position position="545"/>
    </location>
</feature>
<feature type="active site" description="Charge relay system" evidence="2">
    <location>
        <position position="640"/>
    </location>
</feature>
<reference key="1">
    <citation type="journal article" date="2007" name="Proc. Natl. Acad. Sci. U.S.A.">
        <title>Genome sequencing and comparative analysis of Saccharomyces cerevisiae strain YJM789.</title>
        <authorList>
            <person name="Wei W."/>
            <person name="McCusker J.H."/>
            <person name="Hyman R.W."/>
            <person name="Jones T."/>
            <person name="Ning Y."/>
            <person name="Cao Z."/>
            <person name="Gu Z."/>
            <person name="Bruno D."/>
            <person name="Miranda M."/>
            <person name="Nguyen M."/>
            <person name="Wilhelmy J."/>
            <person name="Komp C."/>
            <person name="Tamse R."/>
            <person name="Wang X."/>
            <person name="Jia P."/>
            <person name="Luedi P."/>
            <person name="Oefner P.J."/>
            <person name="David L."/>
            <person name="Dietrich F.S."/>
            <person name="Li Y."/>
            <person name="Davis R.W."/>
            <person name="Steinmetz L.M."/>
        </authorList>
    </citation>
    <scope>NUCLEOTIDE SEQUENCE [LARGE SCALE GENOMIC DNA]</scope>
    <source>
        <strain>YJM789</strain>
    </source>
</reference>
<sequence>MVRFFGLNKKKNEEKENTDLPADNEQNAAETSSSNVSGNEERIDPNSHDANPENANNDDASTTFGSSIQSSSIFSRGRMTYGTGASSSMATSEMRSHSSGHSGSKNSKNLQGFKDVGKPLRAVSFLNPVKEEESQDTQNTLDVSSSTSSTLATSGNARENSFTSRRSITLEYIHKSLSELEENLVDIMDDIHQDVISISKAVIEAIEYFKEFLPTTRDRIPYRISLEKSSSLRKINKIVLHFLDNLLVSDAFSNSRSILLRRFYFFLKKLNLITDDDLISESGVLPCLSVFCIGSHCNLPSMDKLGMILDELTKMDSSIISDQEGAFIAPILRGITPKSSILTIMFGLPNLQHEHYEMIKVLYSLFPDVHMYCVKDYIKKAASAVGSIPSHTAATIDTIAPTKFQFSPPYAVSENPLELPISMSLSTETSAKITGTLGGYLFPQTGSDKKFSQFASCSFAITCAHVVLSEKQDYPNVMVPSNVLQTSYKKVLTKESDRYPDGSVEKTAFLEEVQRIDQNLNWQKSNKFGQVVWGERAIVDHRLSDFAIIKVNSSFKCQNTLGNGLKSFPDPTLRFQNLHVKRKIFKMKPGMKVFKIGASTGYTSGELNSTKLVYWADGKLQSSEFVVASPTPLFASAGDSGAWILTKLEDRLGLGLVGMLHSYDGEQRQFGLFTPIGDILERLHAVTKIQWDIDPQLDG</sequence>
<evidence type="ECO:0000250" key="1"/>
<evidence type="ECO:0000255" key="2"/>
<evidence type="ECO:0000256" key="3">
    <source>
        <dbReference type="SAM" id="MobiDB-lite"/>
    </source>
</evidence>
<evidence type="ECO:0000305" key="4"/>
<accession>A6ZQH6</accession>
<dbReference type="EMBL" id="AAFW02000044">
    <property type="protein sequence ID" value="EDN63228.1"/>
    <property type="molecule type" value="Genomic_DNA"/>
</dbReference>
<dbReference type="SMR" id="A6ZQH6"/>
<dbReference type="MEROPS" id="S64.001"/>
<dbReference type="HOGENOM" id="CLU_012881_1_0_1"/>
<dbReference type="OrthoDB" id="29913at4893"/>
<dbReference type="Proteomes" id="UP000007060">
    <property type="component" value="Unassembled WGS sequence"/>
</dbReference>
<dbReference type="GO" id="GO:0005886">
    <property type="term" value="C:plasma membrane"/>
    <property type="evidence" value="ECO:0007669"/>
    <property type="project" value="UniProtKB-SubCell"/>
</dbReference>
<dbReference type="InterPro" id="IPR009003">
    <property type="entry name" value="Peptidase_S1_PA"/>
</dbReference>
<dbReference type="InterPro" id="IPR012985">
    <property type="entry name" value="Peptidase_S64_Ssy5"/>
</dbReference>
<dbReference type="Pfam" id="PF08192">
    <property type="entry name" value="Peptidase_S64"/>
    <property type="match status" value="1"/>
</dbReference>
<dbReference type="PIRSF" id="PIRSF011716">
    <property type="entry name" value="Peptidase_S64_Ssy5"/>
    <property type="match status" value="1"/>
</dbReference>
<dbReference type="SUPFAM" id="SSF50494">
    <property type="entry name" value="Trypsin-like serine proteases"/>
    <property type="match status" value="1"/>
</dbReference>